<reference key="1">
    <citation type="submission" date="2005-08" db="EMBL/GenBank/DDBJ databases">
        <title>Complete sequence of Synechococcus sp. CC9902.</title>
        <authorList>
            <person name="Copeland A."/>
            <person name="Lucas S."/>
            <person name="Lapidus A."/>
            <person name="Barry K."/>
            <person name="Detter J.C."/>
            <person name="Glavina T."/>
            <person name="Hammon N."/>
            <person name="Israni S."/>
            <person name="Pitluck S."/>
            <person name="Martinez M."/>
            <person name="Schmutz J."/>
            <person name="Larimer F."/>
            <person name="Land M."/>
            <person name="Kyrpides N."/>
            <person name="Ivanova N."/>
            <person name="Richardson P."/>
        </authorList>
    </citation>
    <scope>NUCLEOTIDE SEQUENCE [LARGE SCALE GENOMIC DNA]</scope>
    <source>
        <strain>CC9902</strain>
    </source>
</reference>
<sequence>MADSEEWLEEWLTVGKIVGVQGLQGELRVNPASDFPERFTVPGPRWVRSKGSPPREMQLKTGRQLPGKSLFVVRLDSVDNRDAAEALVGSDWMVPADDRPQLGEGEFHLLDLVGLEARLSPDSDPIGTVTDLISGGNDLLEIKRTDGSKLLIPFVEAIVPEVHLKDGWLLLTPPPGLMDL</sequence>
<proteinExistence type="inferred from homology"/>
<organism>
    <name type="scientific">Synechococcus sp. (strain CC9902)</name>
    <dbReference type="NCBI Taxonomy" id="316279"/>
    <lineage>
        <taxon>Bacteria</taxon>
        <taxon>Bacillati</taxon>
        <taxon>Cyanobacteriota</taxon>
        <taxon>Cyanophyceae</taxon>
        <taxon>Synechococcales</taxon>
        <taxon>Synechococcaceae</taxon>
        <taxon>Synechococcus</taxon>
    </lineage>
</organism>
<comment type="function">
    <text evidence="1">An accessory protein needed during the final step in the assembly of 30S ribosomal subunit, possibly for assembly of the head region. Essential for efficient processing of 16S rRNA. May be needed both before and after RbfA during the maturation of 16S rRNA. It has affinity for free ribosomal 30S subunits but not for 70S ribosomes.</text>
</comment>
<comment type="subunit">
    <text evidence="1">Binds ribosomal protein uS19.</text>
</comment>
<comment type="subcellular location">
    <subcellularLocation>
        <location evidence="1">Cytoplasm</location>
    </subcellularLocation>
</comment>
<comment type="domain">
    <text evidence="1">The PRC barrel domain binds ribosomal protein uS19.</text>
</comment>
<comment type="similarity">
    <text evidence="1">Belongs to the RimM family.</text>
</comment>
<feature type="chain" id="PRO_0000244177" description="Ribosome maturation factor RimM">
    <location>
        <begin position="1"/>
        <end position="180"/>
    </location>
</feature>
<feature type="domain" description="PRC barrel" evidence="1">
    <location>
        <begin position="104"/>
        <end position="177"/>
    </location>
</feature>
<keyword id="KW-0143">Chaperone</keyword>
<keyword id="KW-0963">Cytoplasm</keyword>
<keyword id="KW-1185">Reference proteome</keyword>
<keyword id="KW-0690">Ribosome biogenesis</keyword>
<keyword id="KW-0698">rRNA processing</keyword>
<name>RIMM_SYNS9</name>
<dbReference type="EMBL" id="CP000097">
    <property type="protein sequence ID" value="ABB25151.1"/>
    <property type="molecule type" value="Genomic_DNA"/>
</dbReference>
<dbReference type="RefSeq" id="WP_011359014.1">
    <property type="nucleotide sequence ID" value="NC_007513.1"/>
</dbReference>
<dbReference type="SMR" id="Q3B0H7"/>
<dbReference type="STRING" id="316279.Syncc9902_0176"/>
<dbReference type="KEGG" id="sye:Syncc9902_0176"/>
<dbReference type="eggNOG" id="COG0806">
    <property type="taxonomic scope" value="Bacteria"/>
</dbReference>
<dbReference type="HOGENOM" id="CLU_077636_3_0_3"/>
<dbReference type="OrthoDB" id="9810331at2"/>
<dbReference type="Proteomes" id="UP000002712">
    <property type="component" value="Chromosome"/>
</dbReference>
<dbReference type="GO" id="GO:0005737">
    <property type="term" value="C:cytoplasm"/>
    <property type="evidence" value="ECO:0007669"/>
    <property type="project" value="UniProtKB-SubCell"/>
</dbReference>
<dbReference type="GO" id="GO:0005840">
    <property type="term" value="C:ribosome"/>
    <property type="evidence" value="ECO:0007669"/>
    <property type="project" value="InterPro"/>
</dbReference>
<dbReference type="GO" id="GO:0043022">
    <property type="term" value="F:ribosome binding"/>
    <property type="evidence" value="ECO:0007669"/>
    <property type="project" value="InterPro"/>
</dbReference>
<dbReference type="GO" id="GO:0042274">
    <property type="term" value="P:ribosomal small subunit biogenesis"/>
    <property type="evidence" value="ECO:0007669"/>
    <property type="project" value="UniProtKB-UniRule"/>
</dbReference>
<dbReference type="GO" id="GO:0006364">
    <property type="term" value="P:rRNA processing"/>
    <property type="evidence" value="ECO:0007669"/>
    <property type="project" value="UniProtKB-UniRule"/>
</dbReference>
<dbReference type="Gene3D" id="2.30.30.240">
    <property type="entry name" value="PRC-barrel domain"/>
    <property type="match status" value="1"/>
</dbReference>
<dbReference type="Gene3D" id="2.40.30.60">
    <property type="entry name" value="RimM"/>
    <property type="match status" value="1"/>
</dbReference>
<dbReference type="HAMAP" id="MF_00014">
    <property type="entry name" value="Ribosome_mat_RimM"/>
    <property type="match status" value="1"/>
</dbReference>
<dbReference type="InterPro" id="IPR011033">
    <property type="entry name" value="PRC_barrel-like_sf"/>
</dbReference>
<dbReference type="InterPro" id="IPR056792">
    <property type="entry name" value="PRC_RimM"/>
</dbReference>
<dbReference type="InterPro" id="IPR011961">
    <property type="entry name" value="RimM"/>
</dbReference>
<dbReference type="InterPro" id="IPR002676">
    <property type="entry name" value="RimM_N"/>
</dbReference>
<dbReference type="InterPro" id="IPR036976">
    <property type="entry name" value="RimM_N_sf"/>
</dbReference>
<dbReference type="InterPro" id="IPR009000">
    <property type="entry name" value="Transl_B-barrel_sf"/>
</dbReference>
<dbReference type="NCBIfam" id="TIGR02273">
    <property type="entry name" value="16S_RimM"/>
    <property type="match status" value="1"/>
</dbReference>
<dbReference type="PANTHER" id="PTHR33692">
    <property type="entry name" value="RIBOSOME MATURATION FACTOR RIMM"/>
    <property type="match status" value="1"/>
</dbReference>
<dbReference type="PANTHER" id="PTHR33692:SF1">
    <property type="entry name" value="RIBOSOME MATURATION FACTOR RIMM"/>
    <property type="match status" value="1"/>
</dbReference>
<dbReference type="Pfam" id="PF24986">
    <property type="entry name" value="PRC_RimM"/>
    <property type="match status" value="1"/>
</dbReference>
<dbReference type="Pfam" id="PF01782">
    <property type="entry name" value="RimM"/>
    <property type="match status" value="1"/>
</dbReference>
<dbReference type="SUPFAM" id="SSF50346">
    <property type="entry name" value="PRC-barrel domain"/>
    <property type="match status" value="1"/>
</dbReference>
<dbReference type="SUPFAM" id="SSF50447">
    <property type="entry name" value="Translation proteins"/>
    <property type="match status" value="1"/>
</dbReference>
<evidence type="ECO:0000255" key="1">
    <source>
        <dbReference type="HAMAP-Rule" id="MF_00014"/>
    </source>
</evidence>
<gene>
    <name evidence="1" type="primary">rimM</name>
    <name type="ordered locus">Syncc9902_0176</name>
</gene>
<accession>Q3B0H7</accession>
<protein>
    <recommendedName>
        <fullName evidence="1">Ribosome maturation factor RimM</fullName>
    </recommendedName>
</protein>